<organism>
    <name type="scientific">Oryza sativa subsp. japonica</name>
    <name type="common">Rice</name>
    <dbReference type="NCBI Taxonomy" id="39947"/>
    <lineage>
        <taxon>Eukaryota</taxon>
        <taxon>Viridiplantae</taxon>
        <taxon>Streptophyta</taxon>
        <taxon>Embryophyta</taxon>
        <taxon>Tracheophyta</taxon>
        <taxon>Spermatophyta</taxon>
        <taxon>Magnoliopsida</taxon>
        <taxon>Liliopsida</taxon>
        <taxon>Poales</taxon>
        <taxon>Poaceae</taxon>
        <taxon>BOP clade</taxon>
        <taxon>Oryzoideae</taxon>
        <taxon>Oryzeae</taxon>
        <taxon>Oryzinae</taxon>
        <taxon>Oryza</taxon>
        <taxon>Oryza sativa</taxon>
    </lineage>
</organism>
<evidence type="ECO:0000250" key="1">
    <source>
        <dbReference type="UniProtKB" id="P69441"/>
    </source>
</evidence>
<evidence type="ECO:0000305" key="2"/>
<dbReference type="EC" id="2.7.4.3"/>
<dbReference type="EMBL" id="D10334">
    <property type="protein sequence ID" value="BAA01180.1"/>
    <property type="molecule type" value="mRNA"/>
</dbReference>
<dbReference type="EMBL" id="DP000011">
    <property type="protein sequence ID" value="ABA96905.1"/>
    <property type="molecule type" value="Genomic_DNA"/>
</dbReference>
<dbReference type="EMBL" id="AP008218">
    <property type="protein sequence ID" value="BAF29481.1"/>
    <property type="molecule type" value="Genomic_DNA"/>
</dbReference>
<dbReference type="EMBL" id="AP014968">
    <property type="protein sequence ID" value="BAT16472.1"/>
    <property type="molecule type" value="Genomic_DNA"/>
</dbReference>
<dbReference type="EMBL" id="CM000149">
    <property type="protein sequence ID" value="EAZ20071.1"/>
    <property type="molecule type" value="Genomic_DNA"/>
</dbReference>
<dbReference type="EMBL" id="AK059754">
    <property type="protein sequence ID" value="BAG87103.1"/>
    <property type="molecule type" value="mRNA"/>
</dbReference>
<dbReference type="EMBL" id="AK069870">
    <property type="protein sequence ID" value="BAG91650.1"/>
    <property type="molecule type" value="mRNA"/>
</dbReference>
<dbReference type="EMBL" id="AB041773">
    <property type="protein sequence ID" value="BAA94761.1"/>
    <property type="molecule type" value="Genomic_DNA"/>
</dbReference>
<dbReference type="RefSeq" id="XP_015618268.1">
    <property type="nucleotide sequence ID" value="XM_015762782.1"/>
</dbReference>
<dbReference type="SMR" id="Q08479"/>
<dbReference type="FunCoup" id="Q08479">
    <property type="interactions" value="2439"/>
</dbReference>
<dbReference type="STRING" id="39947.Q08479"/>
<dbReference type="PaxDb" id="39947-Q08479"/>
<dbReference type="EnsemblPlants" id="Os12t0236400-01">
    <property type="protein sequence ID" value="Os12t0236400-01"/>
    <property type="gene ID" value="Os12g0236400"/>
</dbReference>
<dbReference type="Gramene" id="Os12t0236400-01">
    <property type="protein sequence ID" value="Os12t0236400-01"/>
    <property type="gene ID" value="Os12g0236400"/>
</dbReference>
<dbReference type="KEGG" id="dosa:Os12g0236400"/>
<dbReference type="eggNOG" id="KOG3078">
    <property type="taxonomic scope" value="Eukaryota"/>
</dbReference>
<dbReference type="HOGENOM" id="CLU_032354_1_0_1"/>
<dbReference type="InParanoid" id="Q08479"/>
<dbReference type="OMA" id="HYKVDAA"/>
<dbReference type="OrthoDB" id="439792at2759"/>
<dbReference type="Proteomes" id="UP000000763">
    <property type="component" value="Chromosome 12"/>
</dbReference>
<dbReference type="Proteomes" id="UP000007752">
    <property type="component" value="Chromosome 12"/>
</dbReference>
<dbReference type="Proteomes" id="UP000059680">
    <property type="component" value="Chromosome 12"/>
</dbReference>
<dbReference type="GO" id="GO:0005737">
    <property type="term" value="C:cytoplasm"/>
    <property type="evidence" value="ECO:0000318"/>
    <property type="project" value="GO_Central"/>
</dbReference>
<dbReference type="GO" id="GO:0005739">
    <property type="term" value="C:mitochondrion"/>
    <property type="evidence" value="ECO:0000318"/>
    <property type="project" value="GO_Central"/>
</dbReference>
<dbReference type="GO" id="GO:0004017">
    <property type="term" value="F:adenylate kinase activity"/>
    <property type="evidence" value="ECO:0000250"/>
    <property type="project" value="Gramene"/>
</dbReference>
<dbReference type="GO" id="GO:0005524">
    <property type="term" value="F:ATP binding"/>
    <property type="evidence" value="ECO:0007669"/>
    <property type="project" value="UniProtKB-KW"/>
</dbReference>
<dbReference type="GO" id="GO:0006163">
    <property type="term" value="P:purine nucleotide metabolic process"/>
    <property type="evidence" value="ECO:0000270"/>
    <property type="project" value="Gramene"/>
</dbReference>
<dbReference type="CDD" id="cd01428">
    <property type="entry name" value="ADK"/>
    <property type="match status" value="1"/>
</dbReference>
<dbReference type="FunFam" id="3.40.50.300:FF:000106">
    <property type="entry name" value="Adenylate kinase mitochondrial"/>
    <property type="match status" value="1"/>
</dbReference>
<dbReference type="Gene3D" id="3.40.50.300">
    <property type="entry name" value="P-loop containing nucleotide triphosphate hydrolases"/>
    <property type="match status" value="1"/>
</dbReference>
<dbReference type="HAMAP" id="MF_00235">
    <property type="entry name" value="Adenylate_kinase_Adk"/>
    <property type="match status" value="1"/>
</dbReference>
<dbReference type="InterPro" id="IPR006259">
    <property type="entry name" value="Adenyl_kin_sub"/>
</dbReference>
<dbReference type="InterPro" id="IPR000850">
    <property type="entry name" value="Adenylat/UMP-CMP_kin"/>
</dbReference>
<dbReference type="InterPro" id="IPR033690">
    <property type="entry name" value="Adenylat_kinase_CS"/>
</dbReference>
<dbReference type="InterPro" id="IPR007862">
    <property type="entry name" value="Adenylate_kinase_lid-dom"/>
</dbReference>
<dbReference type="InterPro" id="IPR027417">
    <property type="entry name" value="P-loop_NTPase"/>
</dbReference>
<dbReference type="NCBIfam" id="TIGR01351">
    <property type="entry name" value="adk"/>
    <property type="match status" value="1"/>
</dbReference>
<dbReference type="NCBIfam" id="NF001380">
    <property type="entry name" value="PRK00279.1-2"/>
    <property type="match status" value="1"/>
</dbReference>
<dbReference type="NCBIfam" id="NF001381">
    <property type="entry name" value="PRK00279.1-3"/>
    <property type="match status" value="1"/>
</dbReference>
<dbReference type="PANTHER" id="PTHR23359">
    <property type="entry name" value="NUCLEOTIDE KINASE"/>
    <property type="match status" value="1"/>
</dbReference>
<dbReference type="Pfam" id="PF00406">
    <property type="entry name" value="ADK"/>
    <property type="match status" value="1"/>
</dbReference>
<dbReference type="Pfam" id="PF05191">
    <property type="entry name" value="ADK_lid"/>
    <property type="match status" value="1"/>
</dbReference>
<dbReference type="PRINTS" id="PR00094">
    <property type="entry name" value="ADENYLTKNASE"/>
</dbReference>
<dbReference type="SUPFAM" id="SSF52540">
    <property type="entry name" value="P-loop containing nucleoside triphosphate hydrolases"/>
    <property type="match status" value="1"/>
</dbReference>
<dbReference type="PROSITE" id="PS00113">
    <property type="entry name" value="ADENYLATE_KINASE"/>
    <property type="match status" value="1"/>
</dbReference>
<accession>Q08479</accession>
<accession>A0A0P0Y8F3</accession>
<accession>Q0IP84</accession>
<accession>Q2QVB5</accession>
<accession>Q9MAY0</accession>
<protein>
    <recommendedName>
        <fullName>Adenylate kinase 3</fullName>
        <ecNumber>2.7.4.3</ecNumber>
    </recommendedName>
    <alternativeName>
        <fullName>ATP-AMP transphosphorylase 3</fullName>
    </alternativeName>
    <alternativeName>
        <fullName>ATP:AMP phosphotransferase</fullName>
    </alternativeName>
    <alternativeName>
        <fullName>Adenylate kinase A</fullName>
        <shortName>AK A</shortName>
    </alternativeName>
    <alternativeName>
        <fullName>Adenylate monophosphate kinase 3</fullName>
    </alternativeName>
</protein>
<comment type="function">
    <text evidence="1">Catalyzes the reversible transfer of the terminal phosphate group between ATP and AMP. Plays an important role in cellular energy homeostasis and in adenine nucleotide metabolism.</text>
</comment>
<comment type="catalytic activity">
    <reaction evidence="1">
        <text>AMP + ATP = 2 ADP</text>
        <dbReference type="Rhea" id="RHEA:12973"/>
        <dbReference type="ChEBI" id="CHEBI:30616"/>
        <dbReference type="ChEBI" id="CHEBI:456215"/>
        <dbReference type="ChEBI" id="CHEBI:456216"/>
        <dbReference type="EC" id="2.7.4.3"/>
    </reaction>
</comment>
<comment type="subcellular location">
    <subcellularLocation>
        <location evidence="1">Cytoplasm</location>
    </subcellularLocation>
</comment>
<comment type="similarity">
    <text evidence="2">Belongs to the adenylate kinase family.</text>
</comment>
<name>KAD3_ORYSJ</name>
<gene>
    <name type="primary">ADK-A</name>
    <name type="ordered locus">Os12g0236400</name>
    <name type="ordered locus">LOC_Os12g13380</name>
</gene>
<reference key="1">
    <citation type="journal article" date="1992" name="Plant J.">
        <title>Molecular characterization of cDNA encoding for adenylate kinase of rice (Oryza sativa L.).</title>
        <authorList>
            <person name="Kawai M."/>
            <person name="Kidou S."/>
            <person name="Kato A."/>
            <person name="Uchimiya H."/>
        </authorList>
    </citation>
    <scope>NUCLEOTIDE SEQUENCE [MRNA]</scope>
    <source>
        <strain>cv. Yamahoushi</strain>
    </source>
</reference>
<reference key="2">
    <citation type="journal article" date="2005" name="BMC Biol.">
        <title>The sequence of rice chromosomes 11 and 12, rich in disease resistance genes and recent gene duplications.</title>
        <authorList>
            <consortium name="The rice chromosomes 11 and 12 sequencing consortia"/>
        </authorList>
    </citation>
    <scope>NUCLEOTIDE SEQUENCE [LARGE SCALE GENOMIC DNA]</scope>
    <source>
        <strain>cv. Nipponbare</strain>
    </source>
</reference>
<reference key="3">
    <citation type="journal article" date="2005" name="Nature">
        <title>The map-based sequence of the rice genome.</title>
        <authorList>
            <consortium name="International rice genome sequencing project (IRGSP)"/>
        </authorList>
    </citation>
    <scope>NUCLEOTIDE SEQUENCE [LARGE SCALE GENOMIC DNA]</scope>
    <source>
        <strain>cv. Nipponbare</strain>
    </source>
</reference>
<reference key="4">
    <citation type="journal article" date="2008" name="Nucleic Acids Res.">
        <title>The rice annotation project database (RAP-DB): 2008 update.</title>
        <authorList>
            <consortium name="The rice annotation project (RAP)"/>
        </authorList>
    </citation>
    <scope>GENOME REANNOTATION</scope>
    <source>
        <strain>cv. Nipponbare</strain>
    </source>
</reference>
<reference key="5">
    <citation type="journal article" date="2013" name="Rice">
        <title>Improvement of the Oryza sativa Nipponbare reference genome using next generation sequence and optical map data.</title>
        <authorList>
            <person name="Kawahara Y."/>
            <person name="de la Bastide M."/>
            <person name="Hamilton J.P."/>
            <person name="Kanamori H."/>
            <person name="McCombie W.R."/>
            <person name="Ouyang S."/>
            <person name="Schwartz D.C."/>
            <person name="Tanaka T."/>
            <person name="Wu J."/>
            <person name="Zhou S."/>
            <person name="Childs K.L."/>
            <person name="Davidson R.M."/>
            <person name="Lin H."/>
            <person name="Quesada-Ocampo L."/>
            <person name="Vaillancourt B."/>
            <person name="Sakai H."/>
            <person name="Lee S.S."/>
            <person name="Kim J."/>
            <person name="Numa H."/>
            <person name="Itoh T."/>
            <person name="Buell C.R."/>
            <person name="Matsumoto T."/>
        </authorList>
    </citation>
    <scope>GENOME REANNOTATION</scope>
    <source>
        <strain>cv. Nipponbare</strain>
    </source>
</reference>
<reference key="6">
    <citation type="journal article" date="2005" name="PLoS Biol.">
        <title>The genomes of Oryza sativa: a history of duplications.</title>
        <authorList>
            <person name="Yu J."/>
            <person name="Wang J."/>
            <person name="Lin W."/>
            <person name="Li S."/>
            <person name="Li H."/>
            <person name="Zhou J."/>
            <person name="Ni P."/>
            <person name="Dong W."/>
            <person name="Hu S."/>
            <person name="Zeng C."/>
            <person name="Zhang J."/>
            <person name="Zhang Y."/>
            <person name="Li R."/>
            <person name="Xu Z."/>
            <person name="Li S."/>
            <person name="Li X."/>
            <person name="Zheng H."/>
            <person name="Cong L."/>
            <person name="Lin L."/>
            <person name="Yin J."/>
            <person name="Geng J."/>
            <person name="Li G."/>
            <person name="Shi J."/>
            <person name="Liu J."/>
            <person name="Lv H."/>
            <person name="Li J."/>
            <person name="Wang J."/>
            <person name="Deng Y."/>
            <person name="Ran L."/>
            <person name="Shi X."/>
            <person name="Wang X."/>
            <person name="Wu Q."/>
            <person name="Li C."/>
            <person name="Ren X."/>
            <person name="Wang J."/>
            <person name="Wang X."/>
            <person name="Li D."/>
            <person name="Liu D."/>
            <person name="Zhang X."/>
            <person name="Ji Z."/>
            <person name="Zhao W."/>
            <person name="Sun Y."/>
            <person name="Zhang Z."/>
            <person name="Bao J."/>
            <person name="Han Y."/>
            <person name="Dong L."/>
            <person name="Ji J."/>
            <person name="Chen P."/>
            <person name="Wu S."/>
            <person name="Liu J."/>
            <person name="Xiao Y."/>
            <person name="Bu D."/>
            <person name="Tan J."/>
            <person name="Yang L."/>
            <person name="Ye C."/>
            <person name="Zhang J."/>
            <person name="Xu J."/>
            <person name="Zhou Y."/>
            <person name="Yu Y."/>
            <person name="Zhang B."/>
            <person name="Zhuang S."/>
            <person name="Wei H."/>
            <person name="Liu B."/>
            <person name="Lei M."/>
            <person name="Yu H."/>
            <person name="Li Y."/>
            <person name="Xu H."/>
            <person name="Wei S."/>
            <person name="He X."/>
            <person name="Fang L."/>
            <person name="Zhang Z."/>
            <person name="Zhang Y."/>
            <person name="Huang X."/>
            <person name="Su Z."/>
            <person name="Tong W."/>
            <person name="Li J."/>
            <person name="Tong Z."/>
            <person name="Li S."/>
            <person name="Ye J."/>
            <person name="Wang L."/>
            <person name="Fang L."/>
            <person name="Lei T."/>
            <person name="Chen C.-S."/>
            <person name="Chen H.-C."/>
            <person name="Xu Z."/>
            <person name="Li H."/>
            <person name="Huang H."/>
            <person name="Zhang F."/>
            <person name="Xu H."/>
            <person name="Li N."/>
            <person name="Zhao C."/>
            <person name="Li S."/>
            <person name="Dong L."/>
            <person name="Huang Y."/>
            <person name="Li L."/>
            <person name="Xi Y."/>
            <person name="Qi Q."/>
            <person name="Li W."/>
            <person name="Zhang B."/>
            <person name="Hu W."/>
            <person name="Zhang Y."/>
            <person name="Tian X."/>
            <person name="Jiao Y."/>
            <person name="Liang X."/>
            <person name="Jin J."/>
            <person name="Gao L."/>
            <person name="Zheng W."/>
            <person name="Hao B."/>
            <person name="Liu S.-M."/>
            <person name="Wang W."/>
            <person name="Yuan L."/>
            <person name="Cao M."/>
            <person name="McDermott J."/>
            <person name="Samudrala R."/>
            <person name="Wang J."/>
            <person name="Wong G.K.-S."/>
            <person name="Yang H."/>
        </authorList>
    </citation>
    <scope>NUCLEOTIDE SEQUENCE [LARGE SCALE GENOMIC DNA]</scope>
    <source>
        <strain>cv. Nipponbare</strain>
    </source>
</reference>
<reference key="7">
    <citation type="journal article" date="2003" name="Science">
        <title>Collection, mapping, and annotation of over 28,000 cDNA clones from japonica rice.</title>
        <authorList>
            <consortium name="The rice full-length cDNA consortium"/>
        </authorList>
    </citation>
    <scope>NUCLEOTIDE SEQUENCE [LARGE SCALE MRNA]</scope>
    <source>
        <strain>cv. Nipponbare</strain>
    </source>
</reference>
<reference key="8">
    <citation type="submission" date="2000-04" db="EMBL/GenBank/DDBJ databases">
        <title>Oryza sativa AK-a gene, promoter region and partial ORF.</title>
        <authorList>
            <person name="Fukuzawa H."/>
            <person name="Uchimiya H."/>
            <person name="Tagawa M."/>
            <person name="Arai S."/>
        </authorList>
    </citation>
    <scope>NUCLEOTIDE SEQUENCE [GENOMIC DNA] OF 1-209</scope>
</reference>
<proteinExistence type="evidence at transcript level"/>
<feature type="chain" id="PRO_0000158942" description="Adenylate kinase 3">
    <location>
        <begin position="1"/>
        <end position="241"/>
    </location>
</feature>
<feature type="region of interest" description="NMP" evidence="1">
    <location>
        <begin position="58"/>
        <end position="87"/>
    </location>
</feature>
<feature type="region of interest" description="LID" evidence="1">
    <location>
        <begin position="154"/>
        <end position="191"/>
    </location>
</feature>
<feature type="binding site" evidence="1">
    <location>
        <begin position="38"/>
        <end position="43"/>
    </location>
    <ligand>
        <name>ATP</name>
        <dbReference type="ChEBI" id="CHEBI:30616"/>
    </ligand>
</feature>
<feature type="binding site" evidence="1">
    <location>
        <position position="59"/>
    </location>
    <ligand>
        <name>AMP</name>
        <dbReference type="ChEBI" id="CHEBI:456215"/>
    </ligand>
</feature>
<feature type="binding site" evidence="1">
    <location>
        <position position="64"/>
    </location>
    <ligand>
        <name>AMP</name>
        <dbReference type="ChEBI" id="CHEBI:456215"/>
    </ligand>
</feature>
<feature type="binding site" evidence="1">
    <location>
        <begin position="85"/>
        <end position="87"/>
    </location>
    <ligand>
        <name>AMP</name>
        <dbReference type="ChEBI" id="CHEBI:456215"/>
    </ligand>
</feature>
<feature type="binding site" evidence="1">
    <location>
        <begin position="113"/>
        <end position="116"/>
    </location>
    <ligand>
        <name>AMP</name>
        <dbReference type="ChEBI" id="CHEBI:456215"/>
    </ligand>
</feature>
<feature type="binding site" evidence="1">
    <location>
        <position position="120"/>
    </location>
    <ligand>
        <name>AMP</name>
        <dbReference type="ChEBI" id="CHEBI:456215"/>
    </ligand>
</feature>
<feature type="binding site" evidence="1">
    <location>
        <position position="155"/>
    </location>
    <ligand>
        <name>ATP</name>
        <dbReference type="ChEBI" id="CHEBI:30616"/>
    </ligand>
</feature>
<feature type="binding site" evidence="1">
    <location>
        <position position="188"/>
    </location>
    <ligand>
        <name>AMP</name>
        <dbReference type="ChEBI" id="CHEBI:456215"/>
    </ligand>
</feature>
<feature type="binding site" evidence="1">
    <location>
        <position position="199"/>
    </location>
    <ligand>
        <name>AMP</name>
        <dbReference type="ChEBI" id="CHEBI:456215"/>
    </ligand>
</feature>
<keyword id="KW-0067">ATP-binding</keyword>
<keyword id="KW-0963">Cytoplasm</keyword>
<keyword id="KW-0418">Kinase</keyword>
<keyword id="KW-0547">Nucleotide-binding</keyword>
<keyword id="KW-1185">Reference proteome</keyword>
<keyword id="KW-0808">Transferase</keyword>
<sequence length="241" mass="26406">MAANLEDVPSMELMTELLRRMKCSSKPDKRVILVGPPGCGKGTQSPLIKDEFCLCHLATGDMLRAAVAAKTPLGIKAKEAMDKGELVSDDLVVGIIDEAMKKTSCQKGFILDGFPRTVVQAQKLDEMLAKQGTKIDKVLNFAIDDAILEERITGRWIHPSSGRSYHTKFAPPKTPGLDDVTGEPLIQRKDDTAAVLKSRLEAFHVQTKPVIDYYTKKGIVANLHAEKPPKEVTVEVQKALS</sequence>